<reference key="1">
    <citation type="journal article" date="2002" name="J. Mol. Microbiol. Biotechnol.">
        <title>The genome of Methanosarcina mazei: evidence for lateral gene transfer between Bacteria and Archaea.</title>
        <authorList>
            <person name="Deppenmeier U."/>
            <person name="Johann A."/>
            <person name="Hartsch T."/>
            <person name="Merkl R."/>
            <person name="Schmitz R.A."/>
            <person name="Martinez-Arias R."/>
            <person name="Henne A."/>
            <person name="Wiezer A."/>
            <person name="Baeumer S."/>
            <person name="Jacobi C."/>
            <person name="Brueggemann H."/>
            <person name="Lienard T."/>
            <person name="Christmann A."/>
            <person name="Boemecke M."/>
            <person name="Steckel S."/>
            <person name="Bhattacharyya A."/>
            <person name="Lykidis A."/>
            <person name="Overbeek R."/>
            <person name="Klenk H.-P."/>
            <person name="Gunsalus R.P."/>
            <person name="Fritz H.-J."/>
            <person name="Gottschalk G."/>
        </authorList>
    </citation>
    <scope>NUCLEOTIDE SEQUENCE [LARGE SCALE GENOMIC DNA]</scope>
    <source>
        <strain>ATCC BAA-159 / DSM 3647 / Goe1 / Go1 / JCM 11833 / OCM 88</strain>
    </source>
</reference>
<protein>
    <recommendedName>
        <fullName evidence="1">Serine--tRNA ligase</fullName>
        <ecNumber evidence="1">6.1.1.11</ecNumber>
    </recommendedName>
    <alternativeName>
        <fullName evidence="1">Seryl-tRNA synthetase</fullName>
        <shortName evidence="1">SerRS</shortName>
    </alternativeName>
    <alternativeName>
        <fullName evidence="1">Seryl-tRNA(Ser/Sec) synthetase</fullName>
    </alternativeName>
</protein>
<comment type="function">
    <text evidence="1">Catalyzes the attachment of serine to tRNA(Ser). Is also able to aminoacylate tRNA(Sec) with serine, to form the misacylated tRNA L-seryl-tRNA(Sec), which will be further converted into selenocysteinyl-tRNA(Sec).</text>
</comment>
<comment type="catalytic activity">
    <reaction evidence="1">
        <text>tRNA(Ser) + L-serine + ATP = L-seryl-tRNA(Ser) + AMP + diphosphate + H(+)</text>
        <dbReference type="Rhea" id="RHEA:12292"/>
        <dbReference type="Rhea" id="RHEA-COMP:9669"/>
        <dbReference type="Rhea" id="RHEA-COMP:9703"/>
        <dbReference type="ChEBI" id="CHEBI:15378"/>
        <dbReference type="ChEBI" id="CHEBI:30616"/>
        <dbReference type="ChEBI" id="CHEBI:33019"/>
        <dbReference type="ChEBI" id="CHEBI:33384"/>
        <dbReference type="ChEBI" id="CHEBI:78442"/>
        <dbReference type="ChEBI" id="CHEBI:78533"/>
        <dbReference type="ChEBI" id="CHEBI:456215"/>
        <dbReference type="EC" id="6.1.1.11"/>
    </reaction>
</comment>
<comment type="catalytic activity">
    <reaction evidence="1">
        <text>tRNA(Sec) + L-serine + ATP = L-seryl-tRNA(Sec) + AMP + diphosphate + H(+)</text>
        <dbReference type="Rhea" id="RHEA:42580"/>
        <dbReference type="Rhea" id="RHEA-COMP:9742"/>
        <dbReference type="Rhea" id="RHEA-COMP:10128"/>
        <dbReference type="ChEBI" id="CHEBI:15378"/>
        <dbReference type="ChEBI" id="CHEBI:30616"/>
        <dbReference type="ChEBI" id="CHEBI:33019"/>
        <dbReference type="ChEBI" id="CHEBI:33384"/>
        <dbReference type="ChEBI" id="CHEBI:78442"/>
        <dbReference type="ChEBI" id="CHEBI:78533"/>
        <dbReference type="ChEBI" id="CHEBI:456215"/>
        <dbReference type="EC" id="6.1.1.11"/>
    </reaction>
</comment>
<comment type="pathway">
    <text evidence="1">Aminoacyl-tRNA biosynthesis; selenocysteinyl-tRNA(Sec) biosynthesis; L-seryl-tRNA(Sec) from L-serine and tRNA(Sec): step 1/1.</text>
</comment>
<comment type="subunit">
    <text evidence="1">Homodimer. The tRNA molecule binds across the dimer.</text>
</comment>
<comment type="subcellular location">
    <subcellularLocation>
        <location evidence="1">Cytoplasm</location>
    </subcellularLocation>
</comment>
<comment type="domain">
    <text evidence="1">Consists of two distinct domains, a catalytic core and a N-terminal extension that is involved in tRNA binding.</text>
</comment>
<comment type="similarity">
    <text evidence="1">Belongs to the class-II aminoacyl-tRNA synthetase family. Type-1 seryl-tRNA synthetase subfamily.</text>
</comment>
<organism>
    <name type="scientific">Methanosarcina mazei (strain ATCC BAA-159 / DSM 3647 / Goe1 / Go1 / JCM 11833 / OCM 88)</name>
    <name type="common">Methanosarcina frisia</name>
    <dbReference type="NCBI Taxonomy" id="192952"/>
    <lineage>
        <taxon>Archaea</taxon>
        <taxon>Methanobacteriati</taxon>
        <taxon>Methanobacteriota</taxon>
        <taxon>Stenosarchaea group</taxon>
        <taxon>Methanomicrobia</taxon>
        <taxon>Methanosarcinales</taxon>
        <taxon>Methanosarcinaceae</taxon>
        <taxon>Methanosarcina</taxon>
    </lineage>
</organism>
<proteinExistence type="evidence at protein level"/>
<name>SYS_METMA</name>
<gene>
    <name evidence="1" type="primary">serS</name>
    <name type="ordered locus">MM_0865</name>
</gene>
<feature type="chain" id="PRO_0000122175" description="Serine--tRNA ligase">
    <location>
        <begin position="1"/>
        <end position="422"/>
    </location>
</feature>
<feature type="binding site" evidence="1">
    <location>
        <begin position="229"/>
        <end position="231"/>
    </location>
    <ligand>
        <name>L-serine</name>
        <dbReference type="ChEBI" id="CHEBI:33384"/>
    </ligand>
</feature>
<feature type="binding site" evidence="1">
    <location>
        <begin position="258"/>
        <end position="260"/>
    </location>
    <ligand>
        <name>ATP</name>
        <dbReference type="ChEBI" id="CHEBI:30616"/>
    </ligand>
</feature>
<feature type="binding site" evidence="1">
    <location>
        <position position="281"/>
    </location>
    <ligand>
        <name>L-serine</name>
        <dbReference type="ChEBI" id="CHEBI:33384"/>
    </ligand>
</feature>
<feature type="binding site" evidence="1">
    <location>
        <begin position="345"/>
        <end position="348"/>
    </location>
    <ligand>
        <name>ATP</name>
        <dbReference type="ChEBI" id="CHEBI:30616"/>
    </ligand>
</feature>
<feature type="binding site" evidence="1">
    <location>
        <position position="379"/>
    </location>
    <ligand>
        <name>L-serine</name>
        <dbReference type="ChEBI" id="CHEBI:33384"/>
    </ligand>
</feature>
<feature type="helix" evidence="2">
    <location>
        <begin position="4"/>
        <end position="9"/>
    </location>
</feature>
<feature type="helix" evidence="2">
    <location>
        <begin position="11"/>
        <end position="20"/>
    </location>
</feature>
<feature type="helix" evidence="2">
    <location>
        <begin position="26"/>
        <end position="64"/>
    </location>
</feature>
<feature type="helix" evidence="2">
    <location>
        <begin position="70"/>
        <end position="101"/>
    </location>
</feature>
<feature type="helix" evidence="2">
    <location>
        <begin position="118"/>
        <end position="120"/>
    </location>
</feature>
<feature type="strand" evidence="2">
    <location>
        <begin position="123"/>
        <end position="128"/>
    </location>
</feature>
<feature type="helix" evidence="2">
    <location>
        <begin position="140"/>
        <end position="146"/>
    </location>
</feature>
<feature type="strand" evidence="2">
    <location>
        <begin position="150"/>
        <end position="152"/>
    </location>
</feature>
<feature type="helix" evidence="2">
    <location>
        <begin position="153"/>
        <end position="158"/>
    </location>
</feature>
<feature type="helix" evidence="2">
    <location>
        <begin position="169"/>
        <end position="187"/>
    </location>
</feature>
<feature type="strand" evidence="2">
    <location>
        <begin position="197"/>
        <end position="199"/>
    </location>
</feature>
<feature type="helix" evidence="2">
    <location>
        <begin position="201"/>
        <end position="206"/>
    </location>
</feature>
<feature type="turn" evidence="2">
    <location>
        <begin position="210"/>
        <end position="213"/>
    </location>
</feature>
<feature type="helix" evidence="2">
    <location>
        <begin position="214"/>
        <end position="216"/>
    </location>
</feature>
<feature type="helix" evidence="2">
    <location>
        <begin position="221"/>
        <end position="223"/>
    </location>
</feature>
<feature type="helix" evidence="2">
    <location>
        <begin position="231"/>
        <end position="235"/>
    </location>
</feature>
<feature type="helix" evidence="2">
    <location>
        <begin position="236"/>
        <end position="238"/>
    </location>
</feature>
<feature type="strand" evidence="2">
    <location>
        <begin position="245"/>
        <end position="257"/>
    </location>
</feature>
<feature type="turn" evidence="2">
    <location>
        <begin position="269"/>
        <end position="272"/>
    </location>
</feature>
<feature type="strand" evidence="2">
    <location>
        <begin position="275"/>
        <end position="286"/>
    </location>
</feature>
<feature type="helix" evidence="2">
    <location>
        <begin position="288"/>
        <end position="290"/>
    </location>
</feature>
<feature type="helix" evidence="2">
    <location>
        <begin position="291"/>
        <end position="309"/>
    </location>
</feature>
<feature type="strand" evidence="2">
    <location>
        <begin position="313"/>
        <end position="317"/>
    </location>
</feature>
<feature type="turn" evidence="2">
    <location>
        <begin position="320"/>
        <end position="322"/>
    </location>
</feature>
<feature type="strand" evidence="2">
    <location>
        <begin position="328"/>
        <end position="336"/>
    </location>
</feature>
<feature type="helix" evidence="2">
    <location>
        <begin position="338"/>
        <end position="340"/>
    </location>
</feature>
<feature type="strand" evidence="2">
    <location>
        <begin position="341"/>
        <end position="351"/>
    </location>
</feature>
<feature type="helix" evidence="2">
    <location>
        <begin position="355"/>
        <end position="360"/>
    </location>
</feature>
<feature type="strand" evidence="2">
    <location>
        <begin position="362"/>
        <end position="364"/>
    </location>
</feature>
<feature type="strand" evidence="2">
    <location>
        <begin position="374"/>
        <end position="382"/>
    </location>
</feature>
<feature type="helix" evidence="2">
    <location>
        <begin position="383"/>
        <end position="393"/>
    </location>
</feature>
<feature type="helix" evidence="2">
    <location>
        <begin position="405"/>
        <end position="411"/>
    </location>
</feature>
<dbReference type="EC" id="6.1.1.11" evidence="1"/>
<dbReference type="EMBL" id="AE008384">
    <property type="protein sequence ID" value="AAM30561.1"/>
    <property type="molecule type" value="Genomic_DNA"/>
</dbReference>
<dbReference type="RefSeq" id="WP_011032815.1">
    <property type="nucleotide sequence ID" value="NC_003901.1"/>
</dbReference>
<dbReference type="PDB" id="6X94">
    <property type="method" value="X-ray"/>
    <property type="resolution" value="1.45 A"/>
    <property type="chains" value="A=1-420"/>
</dbReference>
<dbReference type="PDBsum" id="6X94"/>
<dbReference type="SMR" id="Q8PYJ6"/>
<dbReference type="GeneID" id="82159889"/>
<dbReference type="KEGG" id="mma:MM_0865"/>
<dbReference type="PATRIC" id="fig|192952.21.peg.1024"/>
<dbReference type="eggNOG" id="arCOG00403">
    <property type="taxonomic scope" value="Archaea"/>
</dbReference>
<dbReference type="HOGENOM" id="CLU_023797_1_1_2"/>
<dbReference type="UniPathway" id="UPA00906">
    <property type="reaction ID" value="UER00895"/>
</dbReference>
<dbReference type="Proteomes" id="UP000000595">
    <property type="component" value="Chromosome"/>
</dbReference>
<dbReference type="GO" id="GO:0005737">
    <property type="term" value="C:cytoplasm"/>
    <property type="evidence" value="ECO:0007669"/>
    <property type="project" value="UniProtKB-SubCell"/>
</dbReference>
<dbReference type="GO" id="GO:0005524">
    <property type="term" value="F:ATP binding"/>
    <property type="evidence" value="ECO:0007669"/>
    <property type="project" value="UniProtKB-UniRule"/>
</dbReference>
<dbReference type="GO" id="GO:0004828">
    <property type="term" value="F:serine-tRNA ligase activity"/>
    <property type="evidence" value="ECO:0007669"/>
    <property type="project" value="UniProtKB-UniRule"/>
</dbReference>
<dbReference type="GO" id="GO:0016260">
    <property type="term" value="P:selenocysteine biosynthetic process"/>
    <property type="evidence" value="ECO:0007669"/>
    <property type="project" value="UniProtKB-UniRule"/>
</dbReference>
<dbReference type="GO" id="GO:0006434">
    <property type="term" value="P:seryl-tRNA aminoacylation"/>
    <property type="evidence" value="ECO:0007669"/>
    <property type="project" value="UniProtKB-UniRule"/>
</dbReference>
<dbReference type="CDD" id="cd00770">
    <property type="entry name" value="SerRS_core"/>
    <property type="match status" value="1"/>
</dbReference>
<dbReference type="Gene3D" id="3.30.930.10">
    <property type="entry name" value="Bira Bifunctional Protein, Domain 2"/>
    <property type="match status" value="1"/>
</dbReference>
<dbReference type="Gene3D" id="1.10.287.40">
    <property type="entry name" value="Serine-tRNA synthetase, tRNA binding domain"/>
    <property type="match status" value="1"/>
</dbReference>
<dbReference type="HAMAP" id="MF_00176">
    <property type="entry name" value="Ser_tRNA_synth_type1"/>
    <property type="match status" value="1"/>
</dbReference>
<dbReference type="InterPro" id="IPR002314">
    <property type="entry name" value="aa-tRNA-synt_IIb"/>
</dbReference>
<dbReference type="InterPro" id="IPR006195">
    <property type="entry name" value="aa-tRNA-synth_II"/>
</dbReference>
<dbReference type="InterPro" id="IPR045864">
    <property type="entry name" value="aa-tRNA-synth_II/BPL/LPL"/>
</dbReference>
<dbReference type="InterPro" id="IPR002317">
    <property type="entry name" value="Ser-tRNA-ligase_type_1"/>
</dbReference>
<dbReference type="InterPro" id="IPR015866">
    <property type="entry name" value="Ser-tRNA-synth_1_N"/>
</dbReference>
<dbReference type="InterPro" id="IPR042103">
    <property type="entry name" value="SerRS_1_N_sf"/>
</dbReference>
<dbReference type="InterPro" id="IPR033729">
    <property type="entry name" value="SerRS_core"/>
</dbReference>
<dbReference type="InterPro" id="IPR010978">
    <property type="entry name" value="tRNA-bd_arm"/>
</dbReference>
<dbReference type="NCBIfam" id="TIGR00414">
    <property type="entry name" value="serS"/>
    <property type="match status" value="1"/>
</dbReference>
<dbReference type="PANTHER" id="PTHR43697:SF1">
    <property type="entry name" value="SERINE--TRNA LIGASE"/>
    <property type="match status" value="1"/>
</dbReference>
<dbReference type="PANTHER" id="PTHR43697">
    <property type="entry name" value="SERYL-TRNA SYNTHETASE"/>
    <property type="match status" value="1"/>
</dbReference>
<dbReference type="Pfam" id="PF02403">
    <property type="entry name" value="Seryl_tRNA_N"/>
    <property type="match status" value="1"/>
</dbReference>
<dbReference type="Pfam" id="PF00587">
    <property type="entry name" value="tRNA-synt_2b"/>
    <property type="match status" value="1"/>
</dbReference>
<dbReference type="PIRSF" id="PIRSF001529">
    <property type="entry name" value="Ser-tRNA-synth_IIa"/>
    <property type="match status" value="1"/>
</dbReference>
<dbReference type="PRINTS" id="PR00981">
    <property type="entry name" value="TRNASYNTHSER"/>
</dbReference>
<dbReference type="SUPFAM" id="SSF55681">
    <property type="entry name" value="Class II aaRS and biotin synthetases"/>
    <property type="match status" value="1"/>
</dbReference>
<dbReference type="SUPFAM" id="SSF46589">
    <property type="entry name" value="tRNA-binding arm"/>
    <property type="match status" value="1"/>
</dbReference>
<dbReference type="PROSITE" id="PS50862">
    <property type="entry name" value="AA_TRNA_LIGASE_II"/>
    <property type="match status" value="1"/>
</dbReference>
<evidence type="ECO:0000255" key="1">
    <source>
        <dbReference type="HAMAP-Rule" id="MF_00176"/>
    </source>
</evidence>
<evidence type="ECO:0007829" key="2">
    <source>
        <dbReference type="PDB" id="6X94"/>
    </source>
</evidence>
<accession>Q8PYJ6</accession>
<keyword id="KW-0002">3D-structure</keyword>
<keyword id="KW-0030">Aminoacyl-tRNA synthetase</keyword>
<keyword id="KW-0067">ATP-binding</keyword>
<keyword id="KW-0963">Cytoplasm</keyword>
<keyword id="KW-0436">Ligase</keyword>
<keyword id="KW-0547">Nucleotide-binding</keyword>
<keyword id="KW-0648">Protein biosynthesis</keyword>
<sequence length="422" mass="48072">MLELKFVRNNPDIVGRALISRNMGTELIDSLLEYDAAWRECLIEGDDLKHKRNVVTREIAQLKKENKDAASRINEMQGINSRIKELDDKIRDYKSKINEIMLSIPNIPSETTPVGKDENDNPVVRVVGEPREFTFTPKPHWEIGESLDILDFERAAKISGQGFAVYKGMGAKLERALINFMLDVHTRQGYLEVFPPVLINEKAMTGTGQLPKFKDDMYGCTDGFYLAPTAEVPVTNLFMDEYMENLPVFLTAYTACFRREAGKHGQDTRGIIRNHQFNKVELVKFVMPETSYEELEKLTLDAEEILKLLKLPYRVVSLCTGDLGFSAAKTYDLEVWVPTQEKYREISSCSNFDNFQARRANIRYRTPEGPQFVHTLNGSGLAVGRTVVAILENYQREDGSVEIPEVLRPYMGGAEEIRKVCH</sequence>